<sequence length="218" mass="24574">MLMYLLKYYPKILFIIEGTLVTLKYSVIAVILGLVIGMLLAICKVNKNRVLRLFANFYTSIFRGTPLLVQLSIIYFAAPYIINIKFNVFMAGVISFALNSGAYVSEVIRAGINTVDKGQFEAAEALAIPKFLIMKDIILPQAINNIFPSLVNELVNLIKESAIISMLGEMDLMRRAQIVSIETYNYFFPMLIAACCYYILVILISFIAKIIEKKMIVN</sequence>
<name>GLNP_RICPR</name>
<gene>
    <name type="primary">glnP</name>
    <name type="ordered locus">RP129</name>
</gene>
<reference key="1">
    <citation type="submission" date="1993-10" db="EMBL/GenBank/DDBJ databases">
        <authorList>
            <person name="Wood D.O."/>
        </authorList>
    </citation>
    <scope>NUCLEOTIDE SEQUENCE [GENOMIC DNA]</scope>
    <source>
        <strain>Madrid E</strain>
    </source>
</reference>
<reference key="2">
    <citation type="journal article" date="1998" name="Nature">
        <title>The genome sequence of Rickettsia prowazekii and the origin of mitochondria.</title>
        <authorList>
            <person name="Andersson S.G.E."/>
            <person name="Zomorodipour A."/>
            <person name="Andersson J.O."/>
            <person name="Sicheritz-Ponten T."/>
            <person name="Alsmark U.C.M."/>
            <person name="Podowski R.M."/>
            <person name="Naeslund A.K."/>
            <person name="Eriksson A.-S."/>
            <person name="Winkler H.H."/>
            <person name="Kurland C.G."/>
        </authorList>
    </citation>
    <scope>NUCLEOTIDE SEQUENCE [LARGE SCALE GENOMIC DNA]</scope>
    <source>
        <strain>Madrid E</strain>
    </source>
</reference>
<protein>
    <recommendedName>
        <fullName>Putative glutamine transport system permease protein GlnP</fullName>
    </recommendedName>
</protein>
<dbReference type="EMBL" id="U02603">
    <property type="protein sequence ID" value="AAA18328.1"/>
    <property type="molecule type" value="Unassigned_DNA"/>
</dbReference>
<dbReference type="EMBL" id="AJ235270">
    <property type="protein sequence ID" value="CAA14598.1"/>
    <property type="molecule type" value="Genomic_DNA"/>
</dbReference>
<dbReference type="PIR" id="G71722">
    <property type="entry name" value="G71722"/>
</dbReference>
<dbReference type="RefSeq" id="NP_220521.1">
    <property type="nucleotide sequence ID" value="NC_000963.1"/>
</dbReference>
<dbReference type="RefSeq" id="WP_010886215.1">
    <property type="nucleotide sequence ID" value="NC_000963.1"/>
</dbReference>
<dbReference type="SMR" id="P41083"/>
<dbReference type="STRING" id="272947.gene:17555212"/>
<dbReference type="EnsemblBacteria" id="CAA14598">
    <property type="protein sequence ID" value="CAA14598"/>
    <property type="gene ID" value="CAA14598"/>
</dbReference>
<dbReference type="KEGG" id="rpr:RP129"/>
<dbReference type="PATRIC" id="fig|272947.5.peg.131"/>
<dbReference type="eggNOG" id="COG0765">
    <property type="taxonomic scope" value="Bacteria"/>
</dbReference>
<dbReference type="HOGENOM" id="CLU_019602_1_1_5"/>
<dbReference type="OrthoDB" id="7190458at2"/>
<dbReference type="Proteomes" id="UP000002480">
    <property type="component" value="Chromosome"/>
</dbReference>
<dbReference type="GO" id="GO:0043190">
    <property type="term" value="C:ATP-binding cassette (ABC) transporter complex"/>
    <property type="evidence" value="ECO:0007669"/>
    <property type="project" value="InterPro"/>
</dbReference>
<dbReference type="GO" id="GO:0022857">
    <property type="term" value="F:transmembrane transporter activity"/>
    <property type="evidence" value="ECO:0007669"/>
    <property type="project" value="InterPro"/>
</dbReference>
<dbReference type="GO" id="GO:0006865">
    <property type="term" value="P:amino acid transport"/>
    <property type="evidence" value="ECO:0007669"/>
    <property type="project" value="UniProtKB-KW"/>
</dbReference>
<dbReference type="CDD" id="cd06261">
    <property type="entry name" value="TM_PBP2"/>
    <property type="match status" value="1"/>
</dbReference>
<dbReference type="FunFam" id="1.10.3720.10:FF:000033">
    <property type="entry name" value="Polar amino acid ABC transporter permease"/>
    <property type="match status" value="1"/>
</dbReference>
<dbReference type="Gene3D" id="1.10.3720.10">
    <property type="entry name" value="MetI-like"/>
    <property type="match status" value="1"/>
</dbReference>
<dbReference type="InterPro" id="IPR010065">
    <property type="entry name" value="AA_ABC_transptr_permease_3TM"/>
</dbReference>
<dbReference type="InterPro" id="IPR043429">
    <property type="entry name" value="ArtM/GltK/GlnP/TcyL/YhdX-like"/>
</dbReference>
<dbReference type="InterPro" id="IPR000515">
    <property type="entry name" value="MetI-like"/>
</dbReference>
<dbReference type="InterPro" id="IPR035906">
    <property type="entry name" value="MetI-like_sf"/>
</dbReference>
<dbReference type="NCBIfam" id="TIGR01726">
    <property type="entry name" value="HEQRo_perm_3TM"/>
    <property type="match status" value="1"/>
</dbReference>
<dbReference type="PANTHER" id="PTHR30614:SF20">
    <property type="entry name" value="GLUTAMINE TRANSPORT SYSTEM PERMEASE PROTEIN GLNP"/>
    <property type="match status" value="1"/>
</dbReference>
<dbReference type="PANTHER" id="PTHR30614">
    <property type="entry name" value="MEMBRANE COMPONENT OF AMINO ACID ABC TRANSPORTER"/>
    <property type="match status" value="1"/>
</dbReference>
<dbReference type="Pfam" id="PF00528">
    <property type="entry name" value="BPD_transp_1"/>
    <property type="match status" value="1"/>
</dbReference>
<dbReference type="SUPFAM" id="SSF161098">
    <property type="entry name" value="MetI-like"/>
    <property type="match status" value="1"/>
</dbReference>
<dbReference type="PROSITE" id="PS50928">
    <property type="entry name" value="ABC_TM1"/>
    <property type="match status" value="1"/>
</dbReference>
<organism>
    <name type="scientific">Rickettsia prowazekii (strain Madrid E)</name>
    <dbReference type="NCBI Taxonomy" id="272947"/>
    <lineage>
        <taxon>Bacteria</taxon>
        <taxon>Pseudomonadati</taxon>
        <taxon>Pseudomonadota</taxon>
        <taxon>Alphaproteobacteria</taxon>
        <taxon>Rickettsiales</taxon>
        <taxon>Rickettsiaceae</taxon>
        <taxon>Rickettsieae</taxon>
        <taxon>Rickettsia</taxon>
        <taxon>typhus group</taxon>
    </lineage>
</organism>
<feature type="chain" id="PRO_0000060034" description="Putative glutamine transport system permease protein GlnP">
    <location>
        <begin position="1"/>
        <end position="218"/>
    </location>
</feature>
<feature type="transmembrane region" description="Helical" evidence="2">
    <location>
        <begin position="25"/>
        <end position="45"/>
    </location>
</feature>
<feature type="transmembrane region" description="Helical" evidence="2">
    <location>
        <begin position="57"/>
        <end position="79"/>
    </location>
</feature>
<feature type="transmembrane region" description="Helical" evidence="2">
    <location>
        <begin position="86"/>
        <end position="108"/>
    </location>
</feature>
<feature type="transmembrane region" description="Helical" evidence="2">
    <location>
        <begin position="187"/>
        <end position="207"/>
    </location>
</feature>
<feature type="domain" description="ABC transmembrane type-1" evidence="2">
    <location>
        <begin position="19"/>
        <end position="208"/>
    </location>
</feature>
<comment type="function">
    <text evidence="1">Part of the binding-protein-dependent transport system for glutamine; probably responsible for the translocation of the substrate across the membrane.</text>
</comment>
<comment type="subcellular location">
    <subcellularLocation>
        <location>Cell inner membrane</location>
        <topology>Multi-pass membrane protein</topology>
    </subcellularLocation>
</comment>
<comment type="similarity">
    <text evidence="3">Belongs to the binding-protein-dependent transport system permease family. HisMQ subfamily.</text>
</comment>
<accession>P41083</accession>
<proteinExistence type="inferred from homology"/>
<keyword id="KW-0029">Amino-acid transport</keyword>
<keyword id="KW-0997">Cell inner membrane</keyword>
<keyword id="KW-1003">Cell membrane</keyword>
<keyword id="KW-0472">Membrane</keyword>
<keyword id="KW-1185">Reference proteome</keyword>
<keyword id="KW-0812">Transmembrane</keyword>
<keyword id="KW-1133">Transmembrane helix</keyword>
<keyword id="KW-0813">Transport</keyword>
<evidence type="ECO:0000250" key="1"/>
<evidence type="ECO:0000255" key="2">
    <source>
        <dbReference type="PROSITE-ProRule" id="PRU00441"/>
    </source>
</evidence>
<evidence type="ECO:0000305" key="3"/>